<organism>
    <name type="scientific">Lactobacillus johnsonii (strain CNCM I-12250 / La1 / NCC 533)</name>
    <dbReference type="NCBI Taxonomy" id="257314"/>
    <lineage>
        <taxon>Bacteria</taxon>
        <taxon>Bacillati</taxon>
        <taxon>Bacillota</taxon>
        <taxon>Bacilli</taxon>
        <taxon>Lactobacillales</taxon>
        <taxon>Lactobacillaceae</taxon>
        <taxon>Lactobacillus</taxon>
    </lineage>
</organism>
<comment type="function">
    <text evidence="1">Methylates ribosomal protein L11.</text>
</comment>
<comment type="catalytic activity">
    <reaction evidence="1">
        <text>L-lysyl-[protein] + 3 S-adenosyl-L-methionine = N(6),N(6),N(6)-trimethyl-L-lysyl-[protein] + 3 S-adenosyl-L-homocysteine + 3 H(+)</text>
        <dbReference type="Rhea" id="RHEA:54192"/>
        <dbReference type="Rhea" id="RHEA-COMP:9752"/>
        <dbReference type="Rhea" id="RHEA-COMP:13826"/>
        <dbReference type="ChEBI" id="CHEBI:15378"/>
        <dbReference type="ChEBI" id="CHEBI:29969"/>
        <dbReference type="ChEBI" id="CHEBI:57856"/>
        <dbReference type="ChEBI" id="CHEBI:59789"/>
        <dbReference type="ChEBI" id="CHEBI:61961"/>
    </reaction>
</comment>
<comment type="subcellular location">
    <subcellularLocation>
        <location evidence="1">Cytoplasm</location>
    </subcellularLocation>
</comment>
<comment type="similarity">
    <text evidence="1">Belongs to the methyltransferase superfamily. PrmA family.</text>
</comment>
<sequence>MKLLAIKVECSYELEDGLSFFMQDELDAQGIESRKRSDFVLEGQKHDSSLVELDDIENLPEDLELTAYFEYKNADKKKIIQKITDKIAEMKGYGLDAGNVSISTKEVADEDWNTAWQKYYHVIDFSRHLAIVPEWEDYQPAFSDQQLIRLDPGLAFGTGGHTTTQLVLLAMERALVKPMSVLDVGTGSGILAIAASKLGASHVLGTDISDEAVTAAKENIALNNIDNIDVRKANLLKDIDEKYDLIVANILADILLELIPDLDNHLNENGKIIFSGIDYLQLPKIEKALEENNFVIKMKMQEGRWIGLLIARKPN</sequence>
<keyword id="KW-0963">Cytoplasm</keyword>
<keyword id="KW-0489">Methyltransferase</keyword>
<keyword id="KW-0949">S-adenosyl-L-methionine</keyword>
<keyword id="KW-0808">Transferase</keyword>
<gene>
    <name evidence="1" type="primary">prmA</name>
    <name type="ordered locus">LJ_1396</name>
</gene>
<name>PRMA_LACJO</name>
<reference key="1">
    <citation type="journal article" date="2004" name="Proc. Natl. Acad. Sci. U.S.A.">
        <title>The genome sequence of the probiotic intestinal bacterium Lactobacillus johnsonii NCC 533.</title>
        <authorList>
            <person name="Pridmore R.D."/>
            <person name="Berger B."/>
            <person name="Desiere F."/>
            <person name="Vilanova D."/>
            <person name="Barretto C."/>
            <person name="Pittet A.-C."/>
            <person name="Zwahlen M.-C."/>
            <person name="Rouvet M."/>
            <person name="Altermann E."/>
            <person name="Barrangou R."/>
            <person name="Mollet B."/>
            <person name="Mercenier A."/>
            <person name="Klaenhammer T."/>
            <person name="Arigoni F."/>
            <person name="Schell M.A."/>
        </authorList>
    </citation>
    <scope>NUCLEOTIDE SEQUENCE [LARGE SCALE GENOMIC DNA]</scope>
    <source>
        <strain>CNCM I-1225 / La1 / NCC 533</strain>
    </source>
</reference>
<dbReference type="EC" id="2.1.1.-" evidence="1"/>
<dbReference type="EMBL" id="AE017198">
    <property type="protein sequence ID" value="AAS09162.1"/>
    <property type="molecule type" value="Genomic_DNA"/>
</dbReference>
<dbReference type="RefSeq" id="WP_011162154.1">
    <property type="nucleotide sequence ID" value="NC_005362.1"/>
</dbReference>
<dbReference type="SMR" id="Q74IX0"/>
<dbReference type="KEGG" id="ljo:LJ_1396"/>
<dbReference type="PATRIC" id="fig|257314.6.peg.1210"/>
<dbReference type="eggNOG" id="COG2264">
    <property type="taxonomic scope" value="Bacteria"/>
</dbReference>
<dbReference type="HOGENOM" id="CLU_049382_0_1_9"/>
<dbReference type="Proteomes" id="UP000000581">
    <property type="component" value="Chromosome"/>
</dbReference>
<dbReference type="GO" id="GO:0005737">
    <property type="term" value="C:cytoplasm"/>
    <property type="evidence" value="ECO:0007669"/>
    <property type="project" value="UniProtKB-SubCell"/>
</dbReference>
<dbReference type="GO" id="GO:0016279">
    <property type="term" value="F:protein-lysine N-methyltransferase activity"/>
    <property type="evidence" value="ECO:0007669"/>
    <property type="project" value="RHEA"/>
</dbReference>
<dbReference type="GO" id="GO:0032259">
    <property type="term" value="P:methylation"/>
    <property type="evidence" value="ECO:0007669"/>
    <property type="project" value="UniProtKB-KW"/>
</dbReference>
<dbReference type="CDD" id="cd02440">
    <property type="entry name" value="AdoMet_MTases"/>
    <property type="match status" value="1"/>
</dbReference>
<dbReference type="Gene3D" id="3.40.50.150">
    <property type="entry name" value="Vaccinia Virus protein VP39"/>
    <property type="match status" value="1"/>
</dbReference>
<dbReference type="HAMAP" id="MF_00735">
    <property type="entry name" value="Methyltr_PrmA"/>
    <property type="match status" value="1"/>
</dbReference>
<dbReference type="InterPro" id="IPR050078">
    <property type="entry name" value="Ribosomal_L11_MeTrfase_PrmA"/>
</dbReference>
<dbReference type="InterPro" id="IPR004498">
    <property type="entry name" value="Ribosomal_PrmA_MeTrfase"/>
</dbReference>
<dbReference type="InterPro" id="IPR029063">
    <property type="entry name" value="SAM-dependent_MTases_sf"/>
</dbReference>
<dbReference type="NCBIfam" id="TIGR00406">
    <property type="entry name" value="prmA"/>
    <property type="match status" value="1"/>
</dbReference>
<dbReference type="PANTHER" id="PTHR43648">
    <property type="entry name" value="ELECTRON TRANSFER FLAVOPROTEIN BETA SUBUNIT LYSINE METHYLTRANSFERASE"/>
    <property type="match status" value="1"/>
</dbReference>
<dbReference type="PANTHER" id="PTHR43648:SF1">
    <property type="entry name" value="ELECTRON TRANSFER FLAVOPROTEIN BETA SUBUNIT LYSINE METHYLTRANSFERASE"/>
    <property type="match status" value="1"/>
</dbReference>
<dbReference type="Pfam" id="PF06325">
    <property type="entry name" value="PrmA"/>
    <property type="match status" value="1"/>
</dbReference>
<dbReference type="PIRSF" id="PIRSF000401">
    <property type="entry name" value="RPL11_MTase"/>
    <property type="match status" value="1"/>
</dbReference>
<dbReference type="SUPFAM" id="SSF53335">
    <property type="entry name" value="S-adenosyl-L-methionine-dependent methyltransferases"/>
    <property type="match status" value="1"/>
</dbReference>
<accession>Q74IX0</accession>
<proteinExistence type="inferred from homology"/>
<feature type="chain" id="PRO_1000062126" description="Ribosomal protein L11 methyltransferase">
    <location>
        <begin position="1"/>
        <end position="315"/>
    </location>
</feature>
<feature type="binding site" evidence="1">
    <location>
        <position position="164"/>
    </location>
    <ligand>
        <name>S-adenosyl-L-methionine</name>
        <dbReference type="ChEBI" id="CHEBI:59789"/>
    </ligand>
</feature>
<feature type="binding site" evidence="1">
    <location>
        <position position="185"/>
    </location>
    <ligand>
        <name>S-adenosyl-L-methionine</name>
        <dbReference type="ChEBI" id="CHEBI:59789"/>
    </ligand>
</feature>
<feature type="binding site" evidence="1">
    <location>
        <position position="207"/>
    </location>
    <ligand>
        <name>S-adenosyl-L-methionine</name>
        <dbReference type="ChEBI" id="CHEBI:59789"/>
    </ligand>
</feature>
<feature type="binding site" evidence="1">
    <location>
        <position position="249"/>
    </location>
    <ligand>
        <name>S-adenosyl-L-methionine</name>
        <dbReference type="ChEBI" id="CHEBI:59789"/>
    </ligand>
</feature>
<protein>
    <recommendedName>
        <fullName evidence="1">Ribosomal protein L11 methyltransferase</fullName>
        <shortName evidence="1">L11 Mtase</shortName>
        <ecNumber evidence="1">2.1.1.-</ecNumber>
    </recommendedName>
</protein>
<evidence type="ECO:0000255" key="1">
    <source>
        <dbReference type="HAMAP-Rule" id="MF_00735"/>
    </source>
</evidence>